<keyword id="KW-1003">Cell membrane</keyword>
<keyword id="KW-0968">Cytoplasmic vesicle</keyword>
<keyword id="KW-1015">Disulfide bond</keyword>
<keyword id="KW-0325">Glycoprotein</keyword>
<keyword id="KW-0407">Ion channel</keyword>
<keyword id="KW-0406">Ion transport</keyword>
<keyword id="KW-0472">Membrane</keyword>
<keyword id="KW-0597">Phosphoprotein</keyword>
<keyword id="KW-1185">Reference proteome</keyword>
<keyword id="KW-0915">Sodium</keyword>
<keyword id="KW-0894">Sodium channel</keyword>
<keyword id="KW-0739">Sodium transport</keyword>
<keyword id="KW-0812">Transmembrane</keyword>
<keyword id="KW-1133">Transmembrane helix</keyword>
<keyword id="KW-0813">Transport</keyword>
<keyword id="KW-0832">Ubl conjugation</keyword>
<proteinExistence type="evidence at protein level"/>
<dbReference type="EMBL" id="AF112186">
    <property type="protein sequence ID" value="AAD21245.1"/>
    <property type="molecule type" value="mRNA"/>
</dbReference>
<dbReference type="EMBL" id="AK028909">
    <property type="protein sequence ID" value="BAC26190.1"/>
    <property type="molecule type" value="mRNA"/>
</dbReference>
<dbReference type="EMBL" id="AK036819">
    <property type="protein sequence ID" value="BAC29591.1"/>
    <property type="molecule type" value="mRNA"/>
</dbReference>
<dbReference type="CCDS" id="CCDS21804.1"/>
<dbReference type="RefSeq" id="NP_001258952.1">
    <property type="nucleotide sequence ID" value="NM_001272023.1"/>
</dbReference>
<dbReference type="RefSeq" id="NP_035455.1">
    <property type="nucleotide sequence ID" value="NM_011325.2"/>
</dbReference>
<dbReference type="SMR" id="Q9WU38"/>
<dbReference type="BioGRID" id="203106">
    <property type="interactions" value="10"/>
</dbReference>
<dbReference type="ComplexPortal" id="CPX-315">
    <property type="entry name" value="Amiloride-sensitive sodium channel complex, alpha-beta-gamma"/>
</dbReference>
<dbReference type="DIP" id="DIP-40891N"/>
<dbReference type="FunCoup" id="Q9WU38">
    <property type="interactions" value="102"/>
</dbReference>
<dbReference type="IntAct" id="Q9WU38">
    <property type="interactions" value="3"/>
</dbReference>
<dbReference type="STRING" id="10090.ENSMUSP00000033161"/>
<dbReference type="ChEMBL" id="CHEMBL5305061"/>
<dbReference type="GuidetoPHARMACOLOGY" id="739"/>
<dbReference type="GlyCosmos" id="Q9WU38">
    <property type="glycosylation" value="3 sites, No reported glycans"/>
</dbReference>
<dbReference type="GlyGen" id="Q9WU38">
    <property type="glycosylation" value="4 sites"/>
</dbReference>
<dbReference type="iPTMnet" id="Q9WU38"/>
<dbReference type="PhosphoSitePlus" id="Q9WU38"/>
<dbReference type="SwissPalm" id="Q9WU38"/>
<dbReference type="PaxDb" id="10090-ENSMUSP00000033161"/>
<dbReference type="ProteomicsDB" id="256755"/>
<dbReference type="Antibodypedia" id="2607">
    <property type="antibodies" value="446 antibodies from 31 providers"/>
</dbReference>
<dbReference type="DNASU" id="20277"/>
<dbReference type="Ensembl" id="ENSMUST00000033161.7">
    <property type="protein sequence ID" value="ENSMUSP00000033161.6"/>
    <property type="gene ID" value="ENSMUSG00000030873.10"/>
</dbReference>
<dbReference type="GeneID" id="20277"/>
<dbReference type="KEGG" id="mmu:20277"/>
<dbReference type="UCSC" id="uc009jnx.2">
    <property type="organism name" value="mouse"/>
</dbReference>
<dbReference type="AGR" id="MGI:104696"/>
<dbReference type="CTD" id="6338"/>
<dbReference type="MGI" id="MGI:104696">
    <property type="gene designation" value="Scnn1b"/>
</dbReference>
<dbReference type="VEuPathDB" id="HostDB:ENSMUSG00000030873"/>
<dbReference type="eggNOG" id="KOG4294">
    <property type="taxonomic scope" value="Eukaryota"/>
</dbReference>
<dbReference type="GeneTree" id="ENSGT00940000160893"/>
<dbReference type="HOGENOM" id="CLU_020415_0_0_1"/>
<dbReference type="InParanoid" id="Q9WU38"/>
<dbReference type="OMA" id="QRETCIS"/>
<dbReference type="OrthoDB" id="6502088at2759"/>
<dbReference type="PhylomeDB" id="Q9WU38"/>
<dbReference type="TreeFam" id="TF330663"/>
<dbReference type="Reactome" id="R-MMU-2672351">
    <property type="pathway name" value="Stimuli-sensing channels"/>
</dbReference>
<dbReference type="Reactome" id="R-MMU-9730628">
    <property type="pathway name" value="Sensory perception of salty taste"/>
</dbReference>
<dbReference type="BioGRID-ORCS" id="20277">
    <property type="hits" value="3 hits in 77 CRISPR screens"/>
</dbReference>
<dbReference type="PRO" id="PR:Q9WU38"/>
<dbReference type="Proteomes" id="UP000000589">
    <property type="component" value="Chromosome 7"/>
</dbReference>
<dbReference type="RNAct" id="Q9WU38">
    <property type="molecule type" value="protein"/>
</dbReference>
<dbReference type="Bgee" id="ENSMUSG00000030873">
    <property type="expression patterns" value="Expressed in vestibular membrane of cochlear duct and 80 other cell types or tissues"/>
</dbReference>
<dbReference type="ExpressionAtlas" id="Q9WU38">
    <property type="expression patterns" value="baseline and differential"/>
</dbReference>
<dbReference type="GO" id="GO:0016324">
    <property type="term" value="C:apical plasma membrane"/>
    <property type="evidence" value="ECO:0000250"/>
    <property type="project" value="UniProtKB"/>
</dbReference>
<dbReference type="GO" id="GO:0030659">
    <property type="term" value="C:cytoplasmic vesicle membrane"/>
    <property type="evidence" value="ECO:0007669"/>
    <property type="project" value="UniProtKB-SubCell"/>
</dbReference>
<dbReference type="GO" id="GO:0009897">
    <property type="term" value="C:external side of plasma membrane"/>
    <property type="evidence" value="ECO:0000314"/>
    <property type="project" value="MGI"/>
</dbReference>
<dbReference type="GO" id="GO:0070062">
    <property type="term" value="C:extracellular exosome"/>
    <property type="evidence" value="ECO:0007669"/>
    <property type="project" value="Ensembl"/>
</dbReference>
<dbReference type="GO" id="GO:0016020">
    <property type="term" value="C:membrane"/>
    <property type="evidence" value="ECO:0000314"/>
    <property type="project" value="MGI"/>
</dbReference>
<dbReference type="GO" id="GO:0005886">
    <property type="term" value="C:plasma membrane"/>
    <property type="evidence" value="ECO:0000250"/>
    <property type="project" value="UniProtKB"/>
</dbReference>
<dbReference type="GO" id="GO:0034706">
    <property type="term" value="C:sodium channel complex"/>
    <property type="evidence" value="ECO:0000314"/>
    <property type="project" value="MGI"/>
</dbReference>
<dbReference type="GO" id="GO:0015280">
    <property type="term" value="F:ligand-gated sodium channel activity"/>
    <property type="evidence" value="ECO:0007669"/>
    <property type="project" value="InterPro"/>
</dbReference>
<dbReference type="GO" id="GO:0005272">
    <property type="term" value="F:sodium channel activity"/>
    <property type="evidence" value="ECO:0000314"/>
    <property type="project" value="MGI"/>
</dbReference>
<dbReference type="GO" id="GO:0050699">
    <property type="term" value="F:WW domain binding"/>
    <property type="evidence" value="ECO:0000353"/>
    <property type="project" value="MGI"/>
</dbReference>
<dbReference type="GO" id="GO:0032341">
    <property type="term" value="P:aldosterone metabolic process"/>
    <property type="evidence" value="ECO:0000315"/>
    <property type="project" value="MGI"/>
</dbReference>
<dbReference type="GO" id="GO:0014824">
    <property type="term" value="P:artery smooth muscle contraction"/>
    <property type="evidence" value="ECO:0000315"/>
    <property type="project" value="MGI"/>
</dbReference>
<dbReference type="GO" id="GO:0071468">
    <property type="term" value="P:cellular response to acidic pH"/>
    <property type="evidence" value="ECO:0007669"/>
    <property type="project" value="Ensembl"/>
</dbReference>
<dbReference type="GO" id="GO:1904045">
    <property type="term" value="P:cellular response to aldosterone"/>
    <property type="evidence" value="ECO:0000314"/>
    <property type="project" value="MGI"/>
</dbReference>
<dbReference type="GO" id="GO:1904117">
    <property type="term" value="P:cellular response to vasopressin"/>
    <property type="evidence" value="ECO:0000303"/>
    <property type="project" value="ComplexPortal"/>
</dbReference>
<dbReference type="GO" id="GO:0042045">
    <property type="term" value="P:epithelial fluid transport"/>
    <property type="evidence" value="ECO:0000315"/>
    <property type="project" value="MGI"/>
</dbReference>
<dbReference type="GO" id="GO:0034101">
    <property type="term" value="P:erythrocyte homeostasis"/>
    <property type="evidence" value="ECO:0000315"/>
    <property type="project" value="MGI"/>
</dbReference>
<dbReference type="GO" id="GO:0010467">
    <property type="term" value="P:gene expression"/>
    <property type="evidence" value="ECO:0000315"/>
    <property type="project" value="MGI"/>
</dbReference>
<dbReference type="GO" id="GO:0006883">
    <property type="term" value="P:intracellular sodium ion homeostasis"/>
    <property type="evidence" value="ECO:0000314"/>
    <property type="project" value="ComplexPortal"/>
</dbReference>
<dbReference type="GO" id="GO:0002269">
    <property type="term" value="P:leukocyte activation involved in inflammatory response"/>
    <property type="evidence" value="ECO:0000314"/>
    <property type="project" value="MGI"/>
</dbReference>
<dbReference type="GO" id="GO:0070254">
    <property type="term" value="P:mucus secretion"/>
    <property type="evidence" value="ECO:0000314"/>
    <property type="project" value="MGI"/>
</dbReference>
<dbReference type="GO" id="GO:0035264">
    <property type="term" value="P:multicellular organism growth"/>
    <property type="evidence" value="ECO:0000315"/>
    <property type="project" value="MGI"/>
</dbReference>
<dbReference type="GO" id="GO:0050891">
    <property type="term" value="P:multicellular organismal-level water homeostasis"/>
    <property type="evidence" value="ECO:0000315"/>
    <property type="project" value="MGI"/>
</dbReference>
<dbReference type="GO" id="GO:0002283">
    <property type="term" value="P:neutrophil activation involved in immune response"/>
    <property type="evidence" value="ECO:0000314"/>
    <property type="project" value="MGI"/>
</dbReference>
<dbReference type="GO" id="GO:0070944">
    <property type="term" value="P:neutrophil-mediated killing of bacterium"/>
    <property type="evidence" value="ECO:0000314"/>
    <property type="project" value="MGI"/>
</dbReference>
<dbReference type="GO" id="GO:0055075">
    <property type="term" value="P:potassium ion homeostasis"/>
    <property type="evidence" value="ECO:0000315"/>
    <property type="project" value="MGI"/>
</dbReference>
<dbReference type="GO" id="GO:0008217">
    <property type="term" value="P:regulation of blood pressure"/>
    <property type="evidence" value="ECO:0000303"/>
    <property type="project" value="ComplexPortal"/>
</dbReference>
<dbReference type="GO" id="GO:0003014">
    <property type="term" value="P:renal system process"/>
    <property type="evidence" value="ECO:0000315"/>
    <property type="project" value="MGI"/>
</dbReference>
<dbReference type="GO" id="GO:0032094">
    <property type="term" value="P:response to food"/>
    <property type="evidence" value="ECO:0000315"/>
    <property type="project" value="MGI"/>
</dbReference>
<dbReference type="GO" id="GO:0009410">
    <property type="term" value="P:response to xenobiotic stimulus"/>
    <property type="evidence" value="ECO:0000315"/>
    <property type="project" value="MGI"/>
</dbReference>
<dbReference type="GO" id="GO:0050914">
    <property type="term" value="P:sensory perception of salty taste"/>
    <property type="evidence" value="ECO:0000303"/>
    <property type="project" value="ComplexPortal"/>
</dbReference>
<dbReference type="GO" id="GO:0050915">
    <property type="term" value="P:sensory perception of sour taste"/>
    <property type="evidence" value="ECO:0000303"/>
    <property type="project" value="ComplexPortal"/>
</dbReference>
<dbReference type="GO" id="GO:0055078">
    <property type="term" value="P:sodium ion homeostasis"/>
    <property type="evidence" value="ECO:0000315"/>
    <property type="project" value="MGI"/>
</dbReference>
<dbReference type="GO" id="GO:0098719">
    <property type="term" value="P:sodium ion import across plasma membrane"/>
    <property type="evidence" value="ECO:0000314"/>
    <property type="project" value="ComplexPortal"/>
</dbReference>
<dbReference type="GO" id="GO:0006814">
    <property type="term" value="P:sodium ion transport"/>
    <property type="evidence" value="ECO:0000314"/>
    <property type="project" value="MGI"/>
</dbReference>
<dbReference type="FunFam" id="2.60.470.10:FF:000003">
    <property type="entry name" value="Amiloride-sensitive sodium channel subunit beta"/>
    <property type="match status" value="1"/>
</dbReference>
<dbReference type="FunFam" id="1.10.287.770:FF:000002">
    <property type="entry name" value="Amiloride-sensitive sodium channel subunit beta 1"/>
    <property type="match status" value="1"/>
</dbReference>
<dbReference type="Gene3D" id="2.60.470.10">
    <property type="entry name" value="Acid-sensing ion channels like domains"/>
    <property type="match status" value="1"/>
</dbReference>
<dbReference type="Gene3D" id="1.10.287.770">
    <property type="entry name" value="YojJ-like"/>
    <property type="match status" value="1"/>
</dbReference>
<dbReference type="InterPro" id="IPR001873">
    <property type="entry name" value="ENaC"/>
</dbReference>
<dbReference type="InterPro" id="IPR004724">
    <property type="entry name" value="ENaC_chordates"/>
</dbReference>
<dbReference type="InterPro" id="IPR020903">
    <property type="entry name" value="ENaC_CS"/>
</dbReference>
<dbReference type="NCBIfam" id="TIGR00859">
    <property type="entry name" value="ENaC"/>
    <property type="match status" value="1"/>
</dbReference>
<dbReference type="PANTHER" id="PTHR11690:SF18">
    <property type="entry name" value="AMILORIDE-SENSITIVE SODIUM CHANNEL SUBUNIT BETA"/>
    <property type="match status" value="1"/>
</dbReference>
<dbReference type="PANTHER" id="PTHR11690">
    <property type="entry name" value="AMILORIDE-SENSITIVE SODIUM CHANNEL-RELATED"/>
    <property type="match status" value="1"/>
</dbReference>
<dbReference type="Pfam" id="PF00858">
    <property type="entry name" value="ASC"/>
    <property type="match status" value="1"/>
</dbReference>
<dbReference type="PRINTS" id="PR01078">
    <property type="entry name" value="AMINACHANNEL"/>
</dbReference>
<dbReference type="PROSITE" id="PS01206">
    <property type="entry name" value="ASC"/>
    <property type="match status" value="1"/>
</dbReference>
<evidence type="ECO:0000250" key="1">
    <source>
        <dbReference type="UniProtKB" id="P37089"/>
    </source>
</evidence>
<evidence type="ECO:0000250" key="2">
    <source>
        <dbReference type="UniProtKB" id="P37090"/>
    </source>
</evidence>
<evidence type="ECO:0000250" key="3">
    <source>
        <dbReference type="UniProtKB" id="P51168"/>
    </source>
</evidence>
<evidence type="ECO:0000255" key="4"/>
<evidence type="ECO:0000256" key="5">
    <source>
        <dbReference type="SAM" id="MobiDB-lite"/>
    </source>
</evidence>
<evidence type="ECO:0000269" key="6">
    <source>
    </source>
</evidence>
<evidence type="ECO:0000269" key="7">
    <source>
    </source>
</evidence>
<evidence type="ECO:0000269" key="8">
    <source>
    </source>
</evidence>
<evidence type="ECO:0000269" key="9">
    <source>
    </source>
</evidence>
<evidence type="ECO:0000269" key="10">
    <source>
    </source>
</evidence>
<evidence type="ECO:0000305" key="11"/>
<evidence type="ECO:0000305" key="12">
    <source>
    </source>
</evidence>
<evidence type="ECO:0000312" key="13">
    <source>
        <dbReference type="MGI" id="MGI:104696"/>
    </source>
</evidence>
<evidence type="ECO:0007744" key="14">
    <source>
    </source>
</evidence>
<sequence>MPVKKYLLKCLHRLQKGPGYTYKELLVWYCNNTNTHGPKRIICEGPKKKAMWFLLTLLFACLVCWQWGVFIQTYLSWEVSVSLSMGFKTMNFPAVTVCNSSPFQYSKVKHLLKDLDELMEAVLEKILAPEASHSNTTRTLNFTIWNHTPLVLIDERNPDHPVVLNLFGDSHNSSNPAPGSTCNAQGCKVAMRLCSANGTVCTLRNFTSATQAVTEWYILQATNIFSQVLPQDLVGMGYAPDRIILACLFGTEPCSHRNFTPIFYPDYGNCYIFNWGMTEETLPSANPGTEFGLKLILDIGQEDYVPFLASTAGARLMLHEQRTYPFIREEGIYAMAGTETSIGVLVDKLQRKGEPYSPCTMNGSDVAIKNLYSVYNTTYSIQACLHSCFQDHMIRNCSCGHYLYPLPEGEKYCNNRDFPDWAYCYLNLQMSVTQRETCLSMCKESCNDTQYKMTISMADWPSEASEDWILHVLSQERDQSSNITLSRKGIVKLNIYFQEFNYRTIEESPANNIVWLLSNLGGQFGFWMGGSVLCLIEFGEIIIDFIWITIIKLVASCKGLRRRRPQAPYTGPPPTVAELVEAHTNFGFQPDTTSCRPHGEVYPDQQTLPIPGTPPPNYDSLRLQPLDTMESDSEVEAI</sequence>
<reference key="1">
    <citation type="journal article" date="1999" name="Am. J. Physiol.">
        <title>Cloning and functional expression of the mouse epithelial sodium channel.</title>
        <authorList>
            <person name="Ahn Y.J."/>
            <person name="Brooker D.R."/>
            <person name="Kosari F."/>
            <person name="Harte B.J."/>
            <person name="Li J."/>
            <person name="Mackler S.A."/>
            <person name="Kleyman T.R."/>
        </authorList>
    </citation>
    <scope>NUCLEOTIDE SEQUENCE [MRNA]</scope>
    <scope>FUNCTION</scope>
    <scope>TRANSPORTER ACTIVITY</scope>
    <scope>ACTIVITY REGULATION</scope>
    <scope>SUBUNIT</scope>
    <scope>TISSUE SPECIFICITY</scope>
    <source>
        <strain>C57BL/6J</strain>
        <tissue>Kidney</tissue>
    </source>
</reference>
<reference key="2">
    <citation type="journal article" date="2005" name="Science">
        <title>The transcriptional landscape of the mammalian genome.</title>
        <authorList>
            <person name="Carninci P."/>
            <person name="Kasukawa T."/>
            <person name="Katayama S."/>
            <person name="Gough J."/>
            <person name="Frith M.C."/>
            <person name="Maeda N."/>
            <person name="Oyama R."/>
            <person name="Ravasi T."/>
            <person name="Lenhard B."/>
            <person name="Wells C."/>
            <person name="Kodzius R."/>
            <person name="Shimokawa K."/>
            <person name="Bajic V.B."/>
            <person name="Brenner S.E."/>
            <person name="Batalov S."/>
            <person name="Forrest A.R."/>
            <person name="Zavolan M."/>
            <person name="Davis M.J."/>
            <person name="Wilming L.G."/>
            <person name="Aidinis V."/>
            <person name="Allen J.E."/>
            <person name="Ambesi-Impiombato A."/>
            <person name="Apweiler R."/>
            <person name="Aturaliya R.N."/>
            <person name="Bailey T.L."/>
            <person name="Bansal M."/>
            <person name="Baxter L."/>
            <person name="Beisel K.W."/>
            <person name="Bersano T."/>
            <person name="Bono H."/>
            <person name="Chalk A.M."/>
            <person name="Chiu K.P."/>
            <person name="Choudhary V."/>
            <person name="Christoffels A."/>
            <person name="Clutterbuck D.R."/>
            <person name="Crowe M.L."/>
            <person name="Dalla E."/>
            <person name="Dalrymple B.P."/>
            <person name="de Bono B."/>
            <person name="Della Gatta G."/>
            <person name="di Bernardo D."/>
            <person name="Down T."/>
            <person name="Engstrom P."/>
            <person name="Fagiolini M."/>
            <person name="Faulkner G."/>
            <person name="Fletcher C.F."/>
            <person name="Fukushima T."/>
            <person name="Furuno M."/>
            <person name="Futaki S."/>
            <person name="Gariboldi M."/>
            <person name="Georgii-Hemming P."/>
            <person name="Gingeras T.R."/>
            <person name="Gojobori T."/>
            <person name="Green R.E."/>
            <person name="Gustincich S."/>
            <person name="Harbers M."/>
            <person name="Hayashi Y."/>
            <person name="Hensch T.K."/>
            <person name="Hirokawa N."/>
            <person name="Hill D."/>
            <person name="Huminiecki L."/>
            <person name="Iacono M."/>
            <person name="Ikeo K."/>
            <person name="Iwama A."/>
            <person name="Ishikawa T."/>
            <person name="Jakt M."/>
            <person name="Kanapin A."/>
            <person name="Katoh M."/>
            <person name="Kawasawa Y."/>
            <person name="Kelso J."/>
            <person name="Kitamura H."/>
            <person name="Kitano H."/>
            <person name="Kollias G."/>
            <person name="Krishnan S.P."/>
            <person name="Kruger A."/>
            <person name="Kummerfeld S.K."/>
            <person name="Kurochkin I.V."/>
            <person name="Lareau L.F."/>
            <person name="Lazarevic D."/>
            <person name="Lipovich L."/>
            <person name="Liu J."/>
            <person name="Liuni S."/>
            <person name="McWilliam S."/>
            <person name="Madan Babu M."/>
            <person name="Madera M."/>
            <person name="Marchionni L."/>
            <person name="Matsuda H."/>
            <person name="Matsuzawa S."/>
            <person name="Miki H."/>
            <person name="Mignone F."/>
            <person name="Miyake S."/>
            <person name="Morris K."/>
            <person name="Mottagui-Tabar S."/>
            <person name="Mulder N."/>
            <person name="Nakano N."/>
            <person name="Nakauchi H."/>
            <person name="Ng P."/>
            <person name="Nilsson R."/>
            <person name="Nishiguchi S."/>
            <person name="Nishikawa S."/>
            <person name="Nori F."/>
            <person name="Ohara O."/>
            <person name="Okazaki Y."/>
            <person name="Orlando V."/>
            <person name="Pang K.C."/>
            <person name="Pavan W.J."/>
            <person name="Pavesi G."/>
            <person name="Pesole G."/>
            <person name="Petrovsky N."/>
            <person name="Piazza S."/>
            <person name="Reed J."/>
            <person name="Reid J.F."/>
            <person name="Ring B.Z."/>
            <person name="Ringwald M."/>
            <person name="Rost B."/>
            <person name="Ruan Y."/>
            <person name="Salzberg S.L."/>
            <person name="Sandelin A."/>
            <person name="Schneider C."/>
            <person name="Schoenbach C."/>
            <person name="Sekiguchi K."/>
            <person name="Semple C.A."/>
            <person name="Seno S."/>
            <person name="Sessa L."/>
            <person name="Sheng Y."/>
            <person name="Shibata Y."/>
            <person name="Shimada H."/>
            <person name="Shimada K."/>
            <person name="Silva D."/>
            <person name="Sinclair B."/>
            <person name="Sperling S."/>
            <person name="Stupka E."/>
            <person name="Sugiura K."/>
            <person name="Sultana R."/>
            <person name="Takenaka Y."/>
            <person name="Taki K."/>
            <person name="Tammoja K."/>
            <person name="Tan S.L."/>
            <person name="Tang S."/>
            <person name="Taylor M.S."/>
            <person name="Tegner J."/>
            <person name="Teichmann S.A."/>
            <person name="Ueda H.R."/>
            <person name="van Nimwegen E."/>
            <person name="Verardo R."/>
            <person name="Wei C.L."/>
            <person name="Yagi K."/>
            <person name="Yamanishi H."/>
            <person name="Zabarovsky E."/>
            <person name="Zhu S."/>
            <person name="Zimmer A."/>
            <person name="Hide W."/>
            <person name="Bult C."/>
            <person name="Grimmond S.M."/>
            <person name="Teasdale R.D."/>
            <person name="Liu E.T."/>
            <person name="Brusic V."/>
            <person name="Quackenbush J."/>
            <person name="Wahlestedt C."/>
            <person name="Mattick J.S."/>
            <person name="Hume D.A."/>
            <person name="Kai C."/>
            <person name="Sasaki D."/>
            <person name="Tomaru Y."/>
            <person name="Fukuda S."/>
            <person name="Kanamori-Katayama M."/>
            <person name="Suzuki M."/>
            <person name="Aoki J."/>
            <person name="Arakawa T."/>
            <person name="Iida J."/>
            <person name="Imamura K."/>
            <person name="Itoh M."/>
            <person name="Kato T."/>
            <person name="Kawaji H."/>
            <person name="Kawagashira N."/>
            <person name="Kawashima T."/>
            <person name="Kojima M."/>
            <person name="Kondo S."/>
            <person name="Konno H."/>
            <person name="Nakano K."/>
            <person name="Ninomiya N."/>
            <person name="Nishio T."/>
            <person name="Okada M."/>
            <person name="Plessy C."/>
            <person name="Shibata K."/>
            <person name="Shiraki T."/>
            <person name="Suzuki S."/>
            <person name="Tagami M."/>
            <person name="Waki K."/>
            <person name="Watahiki A."/>
            <person name="Okamura-Oho Y."/>
            <person name="Suzuki H."/>
            <person name="Kawai J."/>
            <person name="Hayashizaki Y."/>
        </authorList>
    </citation>
    <scope>NUCLEOTIDE SEQUENCE [LARGE SCALE MRNA]</scope>
    <source>
        <strain>C57BL/6J</strain>
        <tissue>Skin</tissue>
        <tissue>Vagina</tissue>
    </source>
</reference>
<reference key="3">
    <citation type="journal article" date="1999" name="Proc. Natl. Acad. Sci. U.S.A.">
        <title>Disruption of the beta subunit of the epithelial Na+ channel in mice: hyperkalemia and neonatal death associated with a pseudohypoaldosteronism phenotype.</title>
        <authorList>
            <person name="McDonald F.J."/>
            <person name="Yang B."/>
            <person name="Hrstka R.F."/>
            <person name="Drummond H.A."/>
            <person name="Tarr D.E."/>
            <person name="McCray P.B. Jr."/>
            <person name="Stokes J.B."/>
            <person name="Welsh M.J."/>
            <person name="Williamson R.A."/>
        </authorList>
    </citation>
    <scope>FUNCTION</scope>
    <scope>DISRUPTION PHENOTYPE</scope>
</reference>
<reference key="4">
    <citation type="journal article" date="2001" name="J. Biol. Chem.">
        <title>The Nedd4-like protein KIAA0439 is a potential regulator of the epithelial sodium channel.</title>
        <authorList>
            <person name="Harvey K.F."/>
            <person name="Dinudom A."/>
            <person name="Cook D.I."/>
            <person name="Kumar S."/>
        </authorList>
    </citation>
    <scope>UBIQUITINATION BY NEDD4 AND NEDD4L</scope>
</reference>
<reference key="5">
    <citation type="journal article" date="2003" name="FASEB J.">
        <title>The role of individual Nedd4-2 (KIAA0439) WW domains in binding and regulating epithelial sodium channels.</title>
        <authorList>
            <person name="Fotia A.B."/>
            <person name="Dinudom A."/>
            <person name="Shearwin K.E."/>
            <person name="Koch J.-P."/>
            <person name="Korbmacher C."/>
            <person name="Cook D.I."/>
            <person name="Kumar S."/>
        </authorList>
    </citation>
    <scope>UBIQUITINATION BY NEDD4L</scope>
</reference>
<reference key="6">
    <citation type="journal article" date="2004" name="J. Biol. Chem.">
        <title>Regulation of neuronal voltage-gated sodium channels by the ubiquitin-protein ligases Nedd4 and Nedd4-2.</title>
        <authorList>
            <person name="Fotia A.B."/>
            <person name="Ekberg J."/>
            <person name="Adams D.J."/>
            <person name="Cook D.I."/>
            <person name="Poronnik P."/>
            <person name="Kumar S."/>
        </authorList>
    </citation>
    <scope>UBIQUITINATION BY NEDD4 AND NEDD4L</scope>
</reference>
<reference key="7">
    <citation type="journal article" date="2010" name="Cell">
        <title>A tissue-specific atlas of mouse protein phosphorylation and expression.</title>
        <authorList>
            <person name="Huttlin E.L."/>
            <person name="Jedrychowski M.P."/>
            <person name="Elias J.E."/>
            <person name="Goswami T."/>
            <person name="Rad R."/>
            <person name="Beausoleil S.A."/>
            <person name="Villen J."/>
            <person name="Haas W."/>
            <person name="Sowa M.E."/>
            <person name="Gygi S.P."/>
        </authorList>
    </citation>
    <scope>PHOSPHORYLATION [LARGE SCALE ANALYSIS] AT SER-631 AND SER-633</scope>
    <scope>IDENTIFICATION BY MASS SPECTROMETRY [LARGE SCALE ANALYSIS]</scope>
    <source>
        <tissue>Kidney</tissue>
    </source>
</reference>
<gene>
    <name evidence="13" type="primary">Scnn1b</name>
</gene>
<accession>Q9WU38</accession>
<organism>
    <name type="scientific">Mus musculus</name>
    <name type="common">Mouse</name>
    <dbReference type="NCBI Taxonomy" id="10090"/>
    <lineage>
        <taxon>Eukaryota</taxon>
        <taxon>Metazoa</taxon>
        <taxon>Chordata</taxon>
        <taxon>Craniata</taxon>
        <taxon>Vertebrata</taxon>
        <taxon>Euteleostomi</taxon>
        <taxon>Mammalia</taxon>
        <taxon>Eutheria</taxon>
        <taxon>Euarchontoglires</taxon>
        <taxon>Glires</taxon>
        <taxon>Rodentia</taxon>
        <taxon>Myomorpha</taxon>
        <taxon>Muroidea</taxon>
        <taxon>Muridae</taxon>
        <taxon>Murinae</taxon>
        <taxon>Mus</taxon>
        <taxon>Mus</taxon>
    </lineage>
</organism>
<protein>
    <recommendedName>
        <fullName evidence="12">Epithelial sodium channel subunit beta</fullName>
    </recommendedName>
    <alternativeName>
        <fullName>Amiloride-sensitive sodium channel subunit beta</fullName>
    </alternativeName>
    <alternativeName>
        <fullName>Beta-NaCH</fullName>
    </alternativeName>
    <alternativeName>
        <fullName>Epithelial Na(+) channel subunit beta</fullName>
        <shortName>Beta-ENaC</shortName>
    </alternativeName>
    <alternativeName>
        <fullName>Nonvoltage-gated sodium channel 1 subunit beta</fullName>
    </alternativeName>
    <alternativeName>
        <fullName>SCNEB</fullName>
    </alternativeName>
</protein>
<name>SCNNB_MOUSE</name>
<feature type="chain" id="PRO_0000181269" description="Epithelial sodium channel subunit beta">
    <location>
        <begin position="1"/>
        <end position="638"/>
    </location>
</feature>
<feature type="topological domain" description="Cytoplasmic" evidence="1">
    <location>
        <begin position="1"/>
        <end position="50"/>
    </location>
</feature>
<feature type="transmembrane region" description="Helical; Name=1" evidence="4">
    <location>
        <begin position="51"/>
        <end position="71"/>
    </location>
</feature>
<feature type="topological domain" description="Extracellular" evidence="1">
    <location>
        <begin position="72"/>
        <end position="530"/>
    </location>
</feature>
<feature type="transmembrane region" description="Helical; Name=2" evidence="4">
    <location>
        <begin position="531"/>
        <end position="551"/>
    </location>
</feature>
<feature type="topological domain" description="Cytoplasmic" evidence="1">
    <location>
        <begin position="552"/>
        <end position="638"/>
    </location>
</feature>
<feature type="region of interest" description="Disordered" evidence="5">
    <location>
        <begin position="594"/>
        <end position="620"/>
    </location>
</feature>
<feature type="short sequence motif" description="PY motif; recruits WW domain-containing proteins and is thereby required for ubiquitination and inhibition of the channel by NEDD4 and NEDD4L" evidence="3">
    <location>
        <begin position="614"/>
        <end position="618"/>
    </location>
</feature>
<feature type="modified residue" description="Phosphoserine" evidence="14">
    <location>
        <position position="631"/>
    </location>
</feature>
<feature type="modified residue" description="Phosphoserine" evidence="14">
    <location>
        <position position="633"/>
    </location>
</feature>
<feature type="glycosylation site" description="N-linked (GlcNAc...) asparagine" evidence="4">
    <location>
        <position position="135"/>
    </location>
</feature>
<feature type="glycosylation site" description="N-linked (GlcNAc...) asparagine" evidence="4">
    <location>
        <position position="141"/>
    </location>
</feature>
<feature type="glycosylation site" description="N-linked (GlcNAc...) asparagine" evidence="4">
    <location>
        <position position="205"/>
    </location>
</feature>
<feature type="disulfide bond" evidence="3">
    <location>
        <begin position="98"/>
        <end position="270"/>
    </location>
</feature>
<feature type="disulfide bond" evidence="3">
    <location>
        <begin position="182"/>
        <end position="187"/>
    </location>
</feature>
<feature type="disulfide bond" evidence="3">
    <location>
        <begin position="194"/>
        <end position="201"/>
    </location>
</feature>
<feature type="disulfide bond" evidence="3">
    <location>
        <begin position="247"/>
        <end position="254"/>
    </location>
</feature>
<feature type="disulfide bond" evidence="3">
    <location>
        <begin position="359"/>
        <end position="446"/>
    </location>
</feature>
<feature type="disulfide bond" evidence="3">
    <location>
        <begin position="384"/>
        <end position="442"/>
    </location>
</feature>
<feature type="disulfide bond" evidence="3">
    <location>
        <begin position="388"/>
        <end position="438"/>
    </location>
</feature>
<feature type="disulfide bond" evidence="3">
    <location>
        <begin position="397"/>
        <end position="424"/>
    </location>
</feature>
<feature type="disulfide bond" evidence="3">
    <location>
        <begin position="399"/>
        <end position="413"/>
    </location>
</feature>
<feature type="sequence conflict" description="In Ref. 2; BAC29591." evidence="11" ref="2">
    <original>S</original>
    <variation>N</variation>
    <location>
        <position position="174"/>
    </location>
</feature>
<feature type="sequence conflict" description="In Ref. 2; BAC26190." evidence="11" ref="2">
    <original>A</original>
    <variation>T</variation>
    <location>
        <position position="239"/>
    </location>
</feature>
<comment type="function">
    <text evidence="6 10">This is one of the three pore-forming subunits of the heterotrimeric epithelial sodium channel (ENaC), a critical regulator of sodium balance and fluid homeostasis (PubMed:10409305). ENaC operates in epithelial tissues, where it mediates the electrodiffusion of sodium ions from extracellular fluid through the apical membrane of cells, with water following osmotically (PubMed:9990092). It plays a key role in maintaining sodium homeostasis through electrogenic sodium reabsorption in the kidneys (PubMed:9990092). This subunit is not essential for ENaC function in airway surface liquid homeostasis and proper mucus clearance (PubMed:9990092).</text>
</comment>
<comment type="catalytic activity">
    <reaction evidence="6">
        <text>Na(+)(in) = Na(+)(out)</text>
        <dbReference type="Rhea" id="RHEA:34963"/>
        <dbReference type="ChEBI" id="CHEBI:29101"/>
    </reaction>
</comment>
<comment type="activity regulation">
    <text evidence="6">Originally identified and characterized by its inhibition by the diuretic drug amiloride.</text>
</comment>
<comment type="subunit">
    <text evidence="3">Component of the heterotrimeric epithelial sodium channel (ENaC) composed of an alpha/SCNN1A, a beta/SCNN1B and a gamma/SCNN1G subunit. Interacts with WWP1 (via WW domains). Interacts with WWP2 (via WW domains); inhibits the channel. Interacts with the full-length immature form of PCSK9 (pro-PCSK9). Interacts (N-glycosylated) with BPIFA1; the interaction is direct and inhibits the proteolytic processing of SCNN1A and SCNN1G and the activation of ENaC.</text>
</comment>
<comment type="subcellular location">
    <subcellularLocation>
        <location evidence="3">Apical cell membrane</location>
        <topology evidence="3">Multi-pass membrane protein</topology>
    </subcellularLocation>
    <subcellularLocation>
        <location evidence="2">Cytoplasmic vesicle membrane</location>
        <topology evidence="3">Multi-pass membrane protein</topology>
    </subcellularLocation>
</comment>
<comment type="tissue specificity">
    <text evidence="6">Lung and kidney.</text>
</comment>
<comment type="PTM">
    <text evidence="2 7 8 9">Ubiquitinated. Can be ubiquitinated at multiple sites and undergo monoubiquitination and polyubiquitination. Ubiquitination by NEDD4 or NEDD4L inhibits the ENaC channel through endocytosis, intracellular retention and degradation of its individual subunits (PubMed:11244092, PubMed:12424229, PubMed:15123669). However, some studies could not confirm the ubiquitination of this subunit of the ENaC (By similarity).</text>
</comment>
<comment type="PTM">
    <text evidence="3">N-glycosylated. N-glycosylation is required for interaction with BPIFA1.</text>
</comment>
<comment type="PTM">
    <text evidence="2">Phosphorylated on serine and threonine residues. Aldosterone and insulin increase the basal level of phosphorylation.</text>
</comment>
<comment type="disruption phenotype">
    <text evidence="10">Scnn1b homozygous knockout mice die within two days of birth, likely due to hyperkalemia (PubMed:9990092). Serum sodium levels are reduced, while serum potassium is significantly elevated. Urine electrolytes show lower potassium and higher sodium concentrations in null mice (PubMed:9990092). These mice do not exhibit defective lung liquid clearance, nor do they die from respiratory failure, with only a slight increase in lung wet weight observed (PubMed:9990092).</text>
</comment>
<comment type="similarity">
    <text evidence="11">Belongs to the amiloride-sensitive sodium channel (TC 1.A.6) family. SCNN1B subfamily.</text>
</comment>